<organism>
    <name type="scientific">Paraburkholderia phymatum (strain DSM 17167 / CIP 108236 / LMG 21445 / STM815)</name>
    <name type="common">Burkholderia phymatum</name>
    <dbReference type="NCBI Taxonomy" id="391038"/>
    <lineage>
        <taxon>Bacteria</taxon>
        <taxon>Pseudomonadati</taxon>
        <taxon>Pseudomonadota</taxon>
        <taxon>Betaproteobacteria</taxon>
        <taxon>Burkholderiales</taxon>
        <taxon>Burkholderiaceae</taxon>
        <taxon>Paraburkholderia</taxon>
    </lineage>
</organism>
<name>GATA_PARP8</name>
<reference key="1">
    <citation type="journal article" date="2014" name="Stand. Genomic Sci.">
        <title>Complete genome sequence of Burkholderia phymatum STM815(T), a broad host range and efficient nitrogen-fixing symbiont of Mimosa species.</title>
        <authorList>
            <person name="Moulin L."/>
            <person name="Klonowska A."/>
            <person name="Caroline B."/>
            <person name="Booth K."/>
            <person name="Vriezen J.A."/>
            <person name="Melkonian R."/>
            <person name="James E.K."/>
            <person name="Young J.P."/>
            <person name="Bena G."/>
            <person name="Hauser L."/>
            <person name="Land M."/>
            <person name="Kyrpides N."/>
            <person name="Bruce D."/>
            <person name="Chain P."/>
            <person name="Copeland A."/>
            <person name="Pitluck S."/>
            <person name="Woyke T."/>
            <person name="Lizotte-Waniewski M."/>
            <person name="Bristow J."/>
            <person name="Riley M."/>
        </authorList>
    </citation>
    <scope>NUCLEOTIDE SEQUENCE [LARGE SCALE GENOMIC DNA]</scope>
    <source>
        <strain>DSM 17167 / CIP 108236 / LMG 21445 / STM815</strain>
    </source>
</reference>
<feature type="chain" id="PRO_1000095115" description="Glutamyl-tRNA(Gln) amidotransferase subunit A">
    <location>
        <begin position="1"/>
        <end position="497"/>
    </location>
</feature>
<feature type="active site" description="Charge relay system" evidence="1">
    <location>
        <position position="75"/>
    </location>
</feature>
<feature type="active site" description="Charge relay system" evidence="1">
    <location>
        <position position="150"/>
    </location>
</feature>
<feature type="active site" description="Acyl-ester intermediate" evidence="1">
    <location>
        <position position="174"/>
    </location>
</feature>
<evidence type="ECO:0000255" key="1">
    <source>
        <dbReference type="HAMAP-Rule" id="MF_00120"/>
    </source>
</evidence>
<proteinExistence type="inferred from homology"/>
<dbReference type="EC" id="6.3.5.7" evidence="1"/>
<dbReference type="EMBL" id="CP001043">
    <property type="protein sequence ID" value="ACC69249.1"/>
    <property type="molecule type" value="Genomic_DNA"/>
</dbReference>
<dbReference type="RefSeq" id="WP_012399479.1">
    <property type="nucleotide sequence ID" value="NC_010622.1"/>
</dbReference>
<dbReference type="SMR" id="B2JJW2"/>
<dbReference type="STRING" id="391038.Bphy_0054"/>
<dbReference type="KEGG" id="bph:Bphy_0054"/>
<dbReference type="eggNOG" id="COG0154">
    <property type="taxonomic scope" value="Bacteria"/>
</dbReference>
<dbReference type="HOGENOM" id="CLU_009600_0_3_4"/>
<dbReference type="OrthoDB" id="9811471at2"/>
<dbReference type="Proteomes" id="UP000001192">
    <property type="component" value="Chromosome 1"/>
</dbReference>
<dbReference type="GO" id="GO:0030956">
    <property type="term" value="C:glutamyl-tRNA(Gln) amidotransferase complex"/>
    <property type="evidence" value="ECO:0007669"/>
    <property type="project" value="InterPro"/>
</dbReference>
<dbReference type="GO" id="GO:0005524">
    <property type="term" value="F:ATP binding"/>
    <property type="evidence" value="ECO:0007669"/>
    <property type="project" value="UniProtKB-KW"/>
</dbReference>
<dbReference type="GO" id="GO:0050567">
    <property type="term" value="F:glutaminyl-tRNA synthase (glutamine-hydrolyzing) activity"/>
    <property type="evidence" value="ECO:0007669"/>
    <property type="project" value="UniProtKB-UniRule"/>
</dbReference>
<dbReference type="GO" id="GO:0006412">
    <property type="term" value="P:translation"/>
    <property type="evidence" value="ECO:0007669"/>
    <property type="project" value="UniProtKB-UniRule"/>
</dbReference>
<dbReference type="Gene3D" id="3.90.1300.10">
    <property type="entry name" value="Amidase signature (AS) domain"/>
    <property type="match status" value="1"/>
</dbReference>
<dbReference type="HAMAP" id="MF_00120">
    <property type="entry name" value="GatA"/>
    <property type="match status" value="1"/>
</dbReference>
<dbReference type="InterPro" id="IPR000120">
    <property type="entry name" value="Amidase"/>
</dbReference>
<dbReference type="InterPro" id="IPR020556">
    <property type="entry name" value="Amidase_CS"/>
</dbReference>
<dbReference type="InterPro" id="IPR023631">
    <property type="entry name" value="Amidase_dom"/>
</dbReference>
<dbReference type="InterPro" id="IPR036928">
    <property type="entry name" value="AS_sf"/>
</dbReference>
<dbReference type="InterPro" id="IPR004412">
    <property type="entry name" value="GatA"/>
</dbReference>
<dbReference type="NCBIfam" id="TIGR00132">
    <property type="entry name" value="gatA"/>
    <property type="match status" value="1"/>
</dbReference>
<dbReference type="PANTHER" id="PTHR11895:SF151">
    <property type="entry name" value="GLUTAMYL-TRNA(GLN) AMIDOTRANSFERASE SUBUNIT A"/>
    <property type="match status" value="1"/>
</dbReference>
<dbReference type="PANTHER" id="PTHR11895">
    <property type="entry name" value="TRANSAMIDASE"/>
    <property type="match status" value="1"/>
</dbReference>
<dbReference type="Pfam" id="PF01425">
    <property type="entry name" value="Amidase"/>
    <property type="match status" value="1"/>
</dbReference>
<dbReference type="SUPFAM" id="SSF75304">
    <property type="entry name" value="Amidase signature (AS) enzymes"/>
    <property type="match status" value="1"/>
</dbReference>
<dbReference type="PROSITE" id="PS00571">
    <property type="entry name" value="AMIDASES"/>
    <property type="match status" value="1"/>
</dbReference>
<accession>B2JJW2</accession>
<gene>
    <name evidence="1" type="primary">gatA</name>
    <name type="ordered locus">Bphy_0054</name>
</gene>
<keyword id="KW-0067">ATP-binding</keyword>
<keyword id="KW-0436">Ligase</keyword>
<keyword id="KW-0547">Nucleotide-binding</keyword>
<keyword id="KW-0648">Protein biosynthesis</keyword>
<keyword id="KW-1185">Reference proteome</keyword>
<sequence>MHEKSLTELRAALDAKQCSAVELAQTYLKRIEDRKALNAFVHVDAQQTLAQAQAADALIAAGNAGPLTGLPIAHKDVFVTRNWRSTAGSKMLENYTSPFDATVVDRLAQAGMVCVGKTNMDEFAMGSSNENSYFGPVQNPWDRKAVPGGSSGGSAAAVAARLAPAATGTDTGGSIRQPASFSGITGIKPTYGRVSRYGMIAFASSLDQGGPMAQTAADCALLLNAMGGFDERDSTSLTHDHEDYTRYLGQDWSGAGNARDKPLAGLRVGLPKEYFGAGLADDVRASIDAALKQYEALGATLVEVSLPKTELSIPVYYVIAPAEASSNLSRFDGVRYGHRAAEYRDLLDMYKKSRAEGFGPEVKRRILVGTYVLSHGYYDAYYLQAQKIRRIIAQDFQEAFRHCDVIMGPVAPSVAWDIGAKGDDPVQMYLADIYTLSVSLAGLPGMSVPCGFGAGANAQRPVGLQIIGNYFNEARMLQVADAFQRATDWHRMAPAGV</sequence>
<protein>
    <recommendedName>
        <fullName evidence="1">Glutamyl-tRNA(Gln) amidotransferase subunit A</fullName>
        <shortName evidence="1">Glu-ADT subunit A</shortName>
        <ecNumber evidence="1">6.3.5.7</ecNumber>
    </recommendedName>
</protein>
<comment type="function">
    <text evidence="1">Allows the formation of correctly charged Gln-tRNA(Gln) through the transamidation of misacylated Glu-tRNA(Gln) in organisms which lack glutaminyl-tRNA synthetase. The reaction takes place in the presence of glutamine and ATP through an activated gamma-phospho-Glu-tRNA(Gln).</text>
</comment>
<comment type="catalytic activity">
    <reaction evidence="1">
        <text>L-glutamyl-tRNA(Gln) + L-glutamine + ATP + H2O = L-glutaminyl-tRNA(Gln) + L-glutamate + ADP + phosphate + H(+)</text>
        <dbReference type="Rhea" id="RHEA:17521"/>
        <dbReference type="Rhea" id="RHEA-COMP:9681"/>
        <dbReference type="Rhea" id="RHEA-COMP:9684"/>
        <dbReference type="ChEBI" id="CHEBI:15377"/>
        <dbReference type="ChEBI" id="CHEBI:15378"/>
        <dbReference type="ChEBI" id="CHEBI:29985"/>
        <dbReference type="ChEBI" id="CHEBI:30616"/>
        <dbReference type="ChEBI" id="CHEBI:43474"/>
        <dbReference type="ChEBI" id="CHEBI:58359"/>
        <dbReference type="ChEBI" id="CHEBI:78520"/>
        <dbReference type="ChEBI" id="CHEBI:78521"/>
        <dbReference type="ChEBI" id="CHEBI:456216"/>
        <dbReference type="EC" id="6.3.5.7"/>
    </reaction>
</comment>
<comment type="subunit">
    <text evidence="1">Heterotrimer of A, B and C subunits.</text>
</comment>
<comment type="similarity">
    <text evidence="1">Belongs to the amidase family. GatA subfamily.</text>
</comment>